<accession>A6U287</accession>
<feature type="chain" id="PRO_0000347809" description="Alanine--tRNA ligase">
    <location>
        <begin position="1"/>
        <end position="876"/>
    </location>
</feature>
<feature type="binding site" evidence="1">
    <location>
        <position position="565"/>
    </location>
    <ligand>
        <name>Zn(2+)</name>
        <dbReference type="ChEBI" id="CHEBI:29105"/>
    </ligand>
</feature>
<feature type="binding site" evidence="1">
    <location>
        <position position="569"/>
    </location>
    <ligand>
        <name>Zn(2+)</name>
        <dbReference type="ChEBI" id="CHEBI:29105"/>
    </ligand>
</feature>
<feature type="binding site" evidence="1">
    <location>
        <position position="667"/>
    </location>
    <ligand>
        <name>Zn(2+)</name>
        <dbReference type="ChEBI" id="CHEBI:29105"/>
    </ligand>
</feature>
<feature type="binding site" evidence="1">
    <location>
        <position position="671"/>
    </location>
    <ligand>
        <name>Zn(2+)</name>
        <dbReference type="ChEBI" id="CHEBI:29105"/>
    </ligand>
</feature>
<dbReference type="EC" id="6.1.1.7" evidence="1"/>
<dbReference type="EMBL" id="CP000736">
    <property type="protein sequence ID" value="ABR52555.1"/>
    <property type="molecule type" value="Genomic_DNA"/>
</dbReference>
<dbReference type="SMR" id="A6U287"/>
<dbReference type="KEGG" id="sah:SaurJH1_1709"/>
<dbReference type="HOGENOM" id="CLU_004485_1_1_9"/>
<dbReference type="GO" id="GO:0005829">
    <property type="term" value="C:cytosol"/>
    <property type="evidence" value="ECO:0007669"/>
    <property type="project" value="TreeGrafter"/>
</dbReference>
<dbReference type="GO" id="GO:0004813">
    <property type="term" value="F:alanine-tRNA ligase activity"/>
    <property type="evidence" value="ECO:0007669"/>
    <property type="project" value="UniProtKB-UniRule"/>
</dbReference>
<dbReference type="GO" id="GO:0002161">
    <property type="term" value="F:aminoacyl-tRNA deacylase activity"/>
    <property type="evidence" value="ECO:0007669"/>
    <property type="project" value="TreeGrafter"/>
</dbReference>
<dbReference type="GO" id="GO:0005524">
    <property type="term" value="F:ATP binding"/>
    <property type="evidence" value="ECO:0007669"/>
    <property type="project" value="UniProtKB-UniRule"/>
</dbReference>
<dbReference type="GO" id="GO:0140096">
    <property type="term" value="F:catalytic activity, acting on a protein"/>
    <property type="evidence" value="ECO:0007669"/>
    <property type="project" value="UniProtKB-ARBA"/>
</dbReference>
<dbReference type="GO" id="GO:0016740">
    <property type="term" value="F:transferase activity"/>
    <property type="evidence" value="ECO:0007669"/>
    <property type="project" value="UniProtKB-ARBA"/>
</dbReference>
<dbReference type="GO" id="GO:0000049">
    <property type="term" value="F:tRNA binding"/>
    <property type="evidence" value="ECO:0007669"/>
    <property type="project" value="UniProtKB-KW"/>
</dbReference>
<dbReference type="GO" id="GO:0008270">
    <property type="term" value="F:zinc ion binding"/>
    <property type="evidence" value="ECO:0007669"/>
    <property type="project" value="UniProtKB-UniRule"/>
</dbReference>
<dbReference type="GO" id="GO:0006419">
    <property type="term" value="P:alanyl-tRNA aminoacylation"/>
    <property type="evidence" value="ECO:0007669"/>
    <property type="project" value="UniProtKB-UniRule"/>
</dbReference>
<dbReference type="CDD" id="cd00673">
    <property type="entry name" value="AlaRS_core"/>
    <property type="match status" value="1"/>
</dbReference>
<dbReference type="FunFam" id="2.40.30.130:FF:000001">
    <property type="entry name" value="Alanine--tRNA ligase"/>
    <property type="match status" value="1"/>
</dbReference>
<dbReference type="FunFam" id="3.10.310.40:FF:000001">
    <property type="entry name" value="Alanine--tRNA ligase"/>
    <property type="match status" value="1"/>
</dbReference>
<dbReference type="FunFam" id="3.30.54.20:FF:000001">
    <property type="entry name" value="Alanine--tRNA ligase"/>
    <property type="match status" value="1"/>
</dbReference>
<dbReference type="FunFam" id="3.30.930.10:FF:000046">
    <property type="entry name" value="Alanine--tRNA ligase"/>
    <property type="match status" value="1"/>
</dbReference>
<dbReference type="FunFam" id="3.30.980.10:FF:000004">
    <property type="entry name" value="Alanine--tRNA ligase, cytoplasmic"/>
    <property type="match status" value="1"/>
</dbReference>
<dbReference type="Gene3D" id="2.40.30.130">
    <property type="match status" value="1"/>
</dbReference>
<dbReference type="Gene3D" id="3.10.310.40">
    <property type="match status" value="1"/>
</dbReference>
<dbReference type="Gene3D" id="3.30.54.20">
    <property type="match status" value="1"/>
</dbReference>
<dbReference type="Gene3D" id="3.30.930.10">
    <property type="entry name" value="Bira Bifunctional Protein, Domain 2"/>
    <property type="match status" value="1"/>
</dbReference>
<dbReference type="Gene3D" id="3.30.980.10">
    <property type="entry name" value="Threonyl-trna Synthetase, Chain A, domain 2"/>
    <property type="match status" value="1"/>
</dbReference>
<dbReference type="HAMAP" id="MF_00036_B">
    <property type="entry name" value="Ala_tRNA_synth_B"/>
    <property type="match status" value="1"/>
</dbReference>
<dbReference type="InterPro" id="IPR045864">
    <property type="entry name" value="aa-tRNA-synth_II/BPL/LPL"/>
</dbReference>
<dbReference type="InterPro" id="IPR002318">
    <property type="entry name" value="Ala-tRNA-lgiase_IIc"/>
</dbReference>
<dbReference type="InterPro" id="IPR018162">
    <property type="entry name" value="Ala-tRNA-ligase_IIc_anticod-bd"/>
</dbReference>
<dbReference type="InterPro" id="IPR018165">
    <property type="entry name" value="Ala-tRNA-synth_IIc_core"/>
</dbReference>
<dbReference type="InterPro" id="IPR018164">
    <property type="entry name" value="Ala-tRNA-synth_IIc_N"/>
</dbReference>
<dbReference type="InterPro" id="IPR050058">
    <property type="entry name" value="Ala-tRNA_ligase"/>
</dbReference>
<dbReference type="InterPro" id="IPR023033">
    <property type="entry name" value="Ala_tRNA_ligase_euk/bac"/>
</dbReference>
<dbReference type="InterPro" id="IPR003156">
    <property type="entry name" value="DHHA1_dom"/>
</dbReference>
<dbReference type="InterPro" id="IPR018163">
    <property type="entry name" value="Thr/Ala-tRNA-synth_IIc_edit"/>
</dbReference>
<dbReference type="InterPro" id="IPR009000">
    <property type="entry name" value="Transl_B-barrel_sf"/>
</dbReference>
<dbReference type="InterPro" id="IPR012947">
    <property type="entry name" value="tRNA_SAD"/>
</dbReference>
<dbReference type="NCBIfam" id="TIGR00344">
    <property type="entry name" value="alaS"/>
    <property type="match status" value="1"/>
</dbReference>
<dbReference type="PANTHER" id="PTHR11777:SF9">
    <property type="entry name" value="ALANINE--TRNA LIGASE, CYTOPLASMIC"/>
    <property type="match status" value="1"/>
</dbReference>
<dbReference type="PANTHER" id="PTHR11777">
    <property type="entry name" value="ALANYL-TRNA SYNTHETASE"/>
    <property type="match status" value="1"/>
</dbReference>
<dbReference type="Pfam" id="PF02272">
    <property type="entry name" value="DHHA1"/>
    <property type="match status" value="1"/>
</dbReference>
<dbReference type="Pfam" id="PF01411">
    <property type="entry name" value="tRNA-synt_2c"/>
    <property type="match status" value="1"/>
</dbReference>
<dbReference type="Pfam" id="PF07973">
    <property type="entry name" value="tRNA_SAD"/>
    <property type="match status" value="1"/>
</dbReference>
<dbReference type="PRINTS" id="PR00980">
    <property type="entry name" value="TRNASYNTHALA"/>
</dbReference>
<dbReference type="SMART" id="SM00863">
    <property type="entry name" value="tRNA_SAD"/>
    <property type="match status" value="1"/>
</dbReference>
<dbReference type="SUPFAM" id="SSF55681">
    <property type="entry name" value="Class II aaRS and biotin synthetases"/>
    <property type="match status" value="1"/>
</dbReference>
<dbReference type="SUPFAM" id="SSF101353">
    <property type="entry name" value="Putative anticodon-binding domain of alanyl-tRNA synthetase (AlaRS)"/>
    <property type="match status" value="1"/>
</dbReference>
<dbReference type="SUPFAM" id="SSF55186">
    <property type="entry name" value="ThrRS/AlaRS common domain"/>
    <property type="match status" value="1"/>
</dbReference>
<dbReference type="SUPFAM" id="SSF50447">
    <property type="entry name" value="Translation proteins"/>
    <property type="match status" value="1"/>
</dbReference>
<dbReference type="PROSITE" id="PS50860">
    <property type="entry name" value="AA_TRNA_LIGASE_II_ALA"/>
    <property type="match status" value="1"/>
</dbReference>
<keyword id="KW-0030">Aminoacyl-tRNA synthetase</keyword>
<keyword id="KW-0067">ATP-binding</keyword>
<keyword id="KW-0963">Cytoplasm</keyword>
<keyword id="KW-0436">Ligase</keyword>
<keyword id="KW-0479">Metal-binding</keyword>
<keyword id="KW-0547">Nucleotide-binding</keyword>
<keyword id="KW-0648">Protein biosynthesis</keyword>
<keyword id="KW-0694">RNA-binding</keyword>
<keyword id="KW-0820">tRNA-binding</keyword>
<keyword id="KW-0862">Zinc</keyword>
<sequence>MKKLKASEIRQKYLDFFVEKGHMVEPSAPLVPIDDDTLLWINSGVATLKKYFDGRETPKKPRIVNSQKAIRTNDIENVGFTARHHTFFEMLGNFSIGDYFKQEAIEFAWEFLTSDKWMGMEPDKLYVTIHPEDMEAYNIWHKDIGLEESRIIRIEGNFWDIGEGPSGPNTEIFYDRGEAYGQDDPAEEMYPGGENERYLEVWNLVFSEFNHNKDHSYTPLPNKNIDTGMGLERMASVSQNVRTNYETDLFMPIMNEIEKVSGKQYLVNNEQDVAFKVIADHIRTIAFAISDGALPANEGRGYVLRRLLRRAVRFSQTLGINEPFMYKLVDIVADIMEPYYPNVKEKADFIKRVIKSEEERFHETLEDGLAILNELIKKAKATTNEINGKDAFKLYDTYGFPIELTEEIAVQAGLKVDMTTFESEMQQQRDRARQARQNSQSMQVQSEVLKNITSASTFVGYDTATAQTTLTHLIYNGEEVSQVEAGETVYFMLTETPFYAVSGGQVADTGIVYNDNFEIAVSEVTKAPNGQNLHKGVVQFGQVNVGATVSAEVNQNDRRDIQKNHSATHLLHAALKSVLGDHVNQAGSLVEADRLRFDFSHFGPMTNDEIDQVERLVNEEIWKGIDVNIQEMDIASAKEMGAMALFGEKYGDVVRVVNMAPFSIELCGGIHVRNTSEIGLFKIVSESGTGAGVRRIEALTGKAAFLYLEDIQEKFNTMKSQMKVKSDDQVVEKLTQLQDEEKALLKQLEQRDKEITSLKMGNIEDQVEEINGYKVLVTEVDVPNAKAIRSTMDDFKSKLQDTIIILASNVDDKVSMVATVPKSLTNNVKAGDLIKQMAPIVGGKGGGRPDMAQGGGTQPENISKSLSFIKDYIKNL</sequence>
<protein>
    <recommendedName>
        <fullName evidence="1">Alanine--tRNA ligase</fullName>
        <ecNumber evidence="1">6.1.1.7</ecNumber>
    </recommendedName>
    <alternativeName>
        <fullName evidence="1">Alanyl-tRNA synthetase</fullName>
        <shortName evidence="1">AlaRS</shortName>
    </alternativeName>
</protein>
<reference key="1">
    <citation type="submission" date="2007-06" db="EMBL/GenBank/DDBJ databases">
        <title>Complete sequence of chromosome of Staphylococcus aureus subsp. aureus JH1.</title>
        <authorList>
            <consortium name="US DOE Joint Genome Institute"/>
            <person name="Copeland A."/>
            <person name="Lucas S."/>
            <person name="Lapidus A."/>
            <person name="Barry K."/>
            <person name="Detter J.C."/>
            <person name="Glavina del Rio T."/>
            <person name="Hammon N."/>
            <person name="Israni S."/>
            <person name="Dalin E."/>
            <person name="Tice H."/>
            <person name="Pitluck S."/>
            <person name="Chain P."/>
            <person name="Malfatti S."/>
            <person name="Shin M."/>
            <person name="Vergez L."/>
            <person name="Schmutz J."/>
            <person name="Larimer F."/>
            <person name="Land M."/>
            <person name="Hauser L."/>
            <person name="Kyrpides N."/>
            <person name="Ivanova N."/>
            <person name="Tomasz A."/>
            <person name="Richardson P."/>
        </authorList>
    </citation>
    <scope>NUCLEOTIDE SEQUENCE [LARGE SCALE GENOMIC DNA]</scope>
    <source>
        <strain>JH1</strain>
    </source>
</reference>
<organism>
    <name type="scientific">Staphylococcus aureus (strain JH1)</name>
    <dbReference type="NCBI Taxonomy" id="359787"/>
    <lineage>
        <taxon>Bacteria</taxon>
        <taxon>Bacillati</taxon>
        <taxon>Bacillota</taxon>
        <taxon>Bacilli</taxon>
        <taxon>Bacillales</taxon>
        <taxon>Staphylococcaceae</taxon>
        <taxon>Staphylococcus</taxon>
    </lineage>
</organism>
<gene>
    <name evidence="1" type="primary">alaS</name>
    <name type="ordered locus">SaurJH1_1709</name>
</gene>
<evidence type="ECO:0000255" key="1">
    <source>
        <dbReference type="HAMAP-Rule" id="MF_00036"/>
    </source>
</evidence>
<comment type="function">
    <text evidence="1">Catalyzes the attachment of alanine to tRNA(Ala) in a two-step reaction: alanine is first activated by ATP to form Ala-AMP and then transferred to the acceptor end of tRNA(Ala). Also edits incorrectly charged Ser-tRNA(Ala) and Gly-tRNA(Ala) via its editing domain.</text>
</comment>
<comment type="catalytic activity">
    <reaction evidence="1">
        <text>tRNA(Ala) + L-alanine + ATP = L-alanyl-tRNA(Ala) + AMP + diphosphate</text>
        <dbReference type="Rhea" id="RHEA:12540"/>
        <dbReference type="Rhea" id="RHEA-COMP:9657"/>
        <dbReference type="Rhea" id="RHEA-COMP:9923"/>
        <dbReference type="ChEBI" id="CHEBI:30616"/>
        <dbReference type="ChEBI" id="CHEBI:33019"/>
        <dbReference type="ChEBI" id="CHEBI:57972"/>
        <dbReference type="ChEBI" id="CHEBI:78442"/>
        <dbReference type="ChEBI" id="CHEBI:78497"/>
        <dbReference type="ChEBI" id="CHEBI:456215"/>
        <dbReference type="EC" id="6.1.1.7"/>
    </reaction>
</comment>
<comment type="cofactor">
    <cofactor evidence="1">
        <name>Zn(2+)</name>
        <dbReference type="ChEBI" id="CHEBI:29105"/>
    </cofactor>
    <text evidence="1">Binds 1 zinc ion per subunit.</text>
</comment>
<comment type="subcellular location">
    <subcellularLocation>
        <location evidence="1">Cytoplasm</location>
    </subcellularLocation>
</comment>
<comment type="domain">
    <text evidence="1">Consists of three domains; the N-terminal catalytic domain, the editing domain and the C-terminal C-Ala domain. The editing domain removes incorrectly charged amino acids, while the C-Ala domain, along with tRNA(Ala), serves as a bridge to cooperatively bring together the editing and aminoacylation centers thus stimulating deacylation of misacylated tRNAs.</text>
</comment>
<comment type="similarity">
    <text evidence="1">Belongs to the class-II aminoacyl-tRNA synthetase family.</text>
</comment>
<name>SYA_STAA2</name>
<proteinExistence type="inferred from homology"/>